<dbReference type="EC" id="1.5.1.5" evidence="1"/>
<dbReference type="EC" id="3.5.4.9" evidence="1"/>
<dbReference type="EMBL" id="CT573213">
    <property type="protein sequence ID" value="CAJ62858.1"/>
    <property type="molecule type" value="Genomic_DNA"/>
</dbReference>
<dbReference type="RefSeq" id="WP_011605343.1">
    <property type="nucleotide sequence ID" value="NC_008278.1"/>
</dbReference>
<dbReference type="SMR" id="Q0RI14"/>
<dbReference type="STRING" id="326424.FRAAL4216"/>
<dbReference type="KEGG" id="fal:FRAAL4216"/>
<dbReference type="eggNOG" id="COG0190">
    <property type="taxonomic scope" value="Bacteria"/>
</dbReference>
<dbReference type="HOGENOM" id="CLU_034045_2_1_11"/>
<dbReference type="OrthoDB" id="9803580at2"/>
<dbReference type="UniPathway" id="UPA00193"/>
<dbReference type="Proteomes" id="UP000000657">
    <property type="component" value="Chromosome"/>
</dbReference>
<dbReference type="GO" id="GO:0005829">
    <property type="term" value="C:cytosol"/>
    <property type="evidence" value="ECO:0007669"/>
    <property type="project" value="TreeGrafter"/>
</dbReference>
<dbReference type="GO" id="GO:0004477">
    <property type="term" value="F:methenyltetrahydrofolate cyclohydrolase activity"/>
    <property type="evidence" value="ECO:0007669"/>
    <property type="project" value="UniProtKB-UniRule"/>
</dbReference>
<dbReference type="GO" id="GO:0004488">
    <property type="term" value="F:methylenetetrahydrofolate dehydrogenase (NADP+) activity"/>
    <property type="evidence" value="ECO:0007669"/>
    <property type="project" value="UniProtKB-UniRule"/>
</dbReference>
<dbReference type="GO" id="GO:0000105">
    <property type="term" value="P:L-histidine biosynthetic process"/>
    <property type="evidence" value="ECO:0007669"/>
    <property type="project" value="UniProtKB-KW"/>
</dbReference>
<dbReference type="GO" id="GO:0009086">
    <property type="term" value="P:methionine biosynthetic process"/>
    <property type="evidence" value="ECO:0007669"/>
    <property type="project" value="UniProtKB-KW"/>
</dbReference>
<dbReference type="GO" id="GO:0006164">
    <property type="term" value="P:purine nucleotide biosynthetic process"/>
    <property type="evidence" value="ECO:0007669"/>
    <property type="project" value="UniProtKB-KW"/>
</dbReference>
<dbReference type="GO" id="GO:0035999">
    <property type="term" value="P:tetrahydrofolate interconversion"/>
    <property type="evidence" value="ECO:0007669"/>
    <property type="project" value="UniProtKB-UniRule"/>
</dbReference>
<dbReference type="CDD" id="cd01080">
    <property type="entry name" value="NAD_bind_m-THF_DH_Cyclohyd"/>
    <property type="match status" value="1"/>
</dbReference>
<dbReference type="FunFam" id="3.40.50.720:FF:000094">
    <property type="entry name" value="Bifunctional protein FolD"/>
    <property type="match status" value="1"/>
</dbReference>
<dbReference type="FunFam" id="3.40.50.10860:FF:000005">
    <property type="entry name" value="C-1-tetrahydrofolate synthase, cytoplasmic, putative"/>
    <property type="match status" value="1"/>
</dbReference>
<dbReference type="Gene3D" id="3.40.50.10860">
    <property type="entry name" value="Leucine Dehydrogenase, chain A, domain 1"/>
    <property type="match status" value="1"/>
</dbReference>
<dbReference type="Gene3D" id="3.40.50.720">
    <property type="entry name" value="NAD(P)-binding Rossmann-like Domain"/>
    <property type="match status" value="1"/>
</dbReference>
<dbReference type="HAMAP" id="MF_01576">
    <property type="entry name" value="THF_DHG_CYH"/>
    <property type="match status" value="1"/>
</dbReference>
<dbReference type="InterPro" id="IPR046346">
    <property type="entry name" value="Aminoacid_DH-like_N_sf"/>
</dbReference>
<dbReference type="InterPro" id="IPR036291">
    <property type="entry name" value="NAD(P)-bd_dom_sf"/>
</dbReference>
<dbReference type="InterPro" id="IPR000672">
    <property type="entry name" value="THF_DH/CycHdrlase"/>
</dbReference>
<dbReference type="InterPro" id="IPR020630">
    <property type="entry name" value="THF_DH/CycHdrlase_cat_dom"/>
</dbReference>
<dbReference type="InterPro" id="IPR020867">
    <property type="entry name" value="THF_DH/CycHdrlase_CS"/>
</dbReference>
<dbReference type="InterPro" id="IPR020631">
    <property type="entry name" value="THF_DH/CycHdrlase_NAD-bd_dom"/>
</dbReference>
<dbReference type="NCBIfam" id="NF010783">
    <property type="entry name" value="PRK14186.1"/>
    <property type="match status" value="1"/>
</dbReference>
<dbReference type="PANTHER" id="PTHR48099:SF5">
    <property type="entry name" value="C-1-TETRAHYDROFOLATE SYNTHASE, CYTOPLASMIC"/>
    <property type="match status" value="1"/>
</dbReference>
<dbReference type="PANTHER" id="PTHR48099">
    <property type="entry name" value="C-1-TETRAHYDROFOLATE SYNTHASE, CYTOPLASMIC-RELATED"/>
    <property type="match status" value="1"/>
</dbReference>
<dbReference type="Pfam" id="PF00763">
    <property type="entry name" value="THF_DHG_CYH"/>
    <property type="match status" value="1"/>
</dbReference>
<dbReference type="Pfam" id="PF02882">
    <property type="entry name" value="THF_DHG_CYH_C"/>
    <property type="match status" value="1"/>
</dbReference>
<dbReference type="PRINTS" id="PR00085">
    <property type="entry name" value="THFDHDRGNASE"/>
</dbReference>
<dbReference type="SUPFAM" id="SSF53223">
    <property type="entry name" value="Aminoacid dehydrogenase-like, N-terminal domain"/>
    <property type="match status" value="1"/>
</dbReference>
<dbReference type="SUPFAM" id="SSF51735">
    <property type="entry name" value="NAD(P)-binding Rossmann-fold domains"/>
    <property type="match status" value="1"/>
</dbReference>
<dbReference type="PROSITE" id="PS00767">
    <property type="entry name" value="THF_DHG_CYH_2"/>
    <property type="match status" value="1"/>
</dbReference>
<name>FOLD2_FRAAA</name>
<gene>
    <name evidence="1" type="primary">folD2</name>
    <name type="ordered locus">FRAAL4216</name>
</gene>
<protein>
    <recommendedName>
        <fullName evidence="1">Bifunctional protein FolD 2</fullName>
    </recommendedName>
    <domain>
        <recommendedName>
            <fullName evidence="1">Methylenetetrahydrofolate dehydrogenase</fullName>
            <ecNumber evidence="1">1.5.1.5</ecNumber>
        </recommendedName>
    </domain>
    <domain>
        <recommendedName>
            <fullName evidence="1">Methenyltetrahydrofolate cyclohydrolase</fullName>
            <ecNumber evidence="1">3.5.4.9</ecNumber>
        </recommendedName>
    </domain>
</protein>
<feature type="chain" id="PRO_0000305819" description="Bifunctional protein FolD 2">
    <location>
        <begin position="1"/>
        <end position="288"/>
    </location>
</feature>
<feature type="binding site" evidence="1">
    <location>
        <begin position="166"/>
        <end position="168"/>
    </location>
    <ligand>
        <name>NADP(+)</name>
        <dbReference type="ChEBI" id="CHEBI:58349"/>
    </ligand>
</feature>
<feature type="binding site" evidence="1">
    <location>
        <position position="191"/>
    </location>
    <ligand>
        <name>NADP(+)</name>
        <dbReference type="ChEBI" id="CHEBI:58349"/>
    </ligand>
</feature>
<sequence length="288" mass="29318">MSAVIIDGKAVAARVRADVARDVAEFRAATGRQPGLATVLVGDDPASAVYIGGKRRSCVEAGMADLHQHLPADTPQDEIAALLDSLAADPAVSGILLQLPVPEGLDGAALVGRIPPEKDVDGLTTASVGLLARGLPGLRPCTPSGIIELLDAYDVELSGAPTVVVGRSELVGRPVAQLLVGRNATVTICHSRTRDLAAVCRGADVLVVAAGKQAIIGADAVKPGATVIDVGMHRTEQGLRGDVDFDAVREVAGRLTPVPGGVGPMTIAMLLRNTLLAARAAAEVGSLV</sequence>
<evidence type="ECO:0000255" key="1">
    <source>
        <dbReference type="HAMAP-Rule" id="MF_01576"/>
    </source>
</evidence>
<comment type="function">
    <text evidence="1">Catalyzes the oxidation of 5,10-methylenetetrahydrofolate to 5,10-methenyltetrahydrofolate and then the hydrolysis of 5,10-methenyltetrahydrofolate to 10-formyltetrahydrofolate.</text>
</comment>
<comment type="catalytic activity">
    <reaction evidence="1">
        <text>(6R)-5,10-methylene-5,6,7,8-tetrahydrofolate + NADP(+) = (6R)-5,10-methenyltetrahydrofolate + NADPH</text>
        <dbReference type="Rhea" id="RHEA:22812"/>
        <dbReference type="ChEBI" id="CHEBI:15636"/>
        <dbReference type="ChEBI" id="CHEBI:57455"/>
        <dbReference type="ChEBI" id="CHEBI:57783"/>
        <dbReference type="ChEBI" id="CHEBI:58349"/>
        <dbReference type="EC" id="1.5.1.5"/>
    </reaction>
</comment>
<comment type="catalytic activity">
    <reaction evidence="1">
        <text>(6R)-5,10-methenyltetrahydrofolate + H2O = (6R)-10-formyltetrahydrofolate + H(+)</text>
        <dbReference type="Rhea" id="RHEA:23700"/>
        <dbReference type="ChEBI" id="CHEBI:15377"/>
        <dbReference type="ChEBI" id="CHEBI:15378"/>
        <dbReference type="ChEBI" id="CHEBI:57455"/>
        <dbReference type="ChEBI" id="CHEBI:195366"/>
        <dbReference type="EC" id="3.5.4.9"/>
    </reaction>
</comment>
<comment type="pathway">
    <text evidence="1">One-carbon metabolism; tetrahydrofolate interconversion.</text>
</comment>
<comment type="subunit">
    <text evidence="1">Homodimer.</text>
</comment>
<comment type="similarity">
    <text evidence="1">Belongs to the tetrahydrofolate dehydrogenase/cyclohydrolase family.</text>
</comment>
<reference key="1">
    <citation type="journal article" date="2007" name="Genome Res.">
        <title>Genome characteristics of facultatively symbiotic Frankia sp. strains reflect host range and host plant biogeography.</title>
        <authorList>
            <person name="Normand P."/>
            <person name="Lapierre P."/>
            <person name="Tisa L.S."/>
            <person name="Gogarten J.P."/>
            <person name="Alloisio N."/>
            <person name="Bagnarol E."/>
            <person name="Bassi C.A."/>
            <person name="Berry A.M."/>
            <person name="Bickhart D.M."/>
            <person name="Choisne N."/>
            <person name="Couloux A."/>
            <person name="Cournoyer B."/>
            <person name="Cruveiller S."/>
            <person name="Daubin V."/>
            <person name="Demange N."/>
            <person name="Francino M.P."/>
            <person name="Goltsman E."/>
            <person name="Huang Y."/>
            <person name="Kopp O.R."/>
            <person name="Labarre L."/>
            <person name="Lapidus A."/>
            <person name="Lavire C."/>
            <person name="Marechal J."/>
            <person name="Martinez M."/>
            <person name="Mastronunzio J.E."/>
            <person name="Mullin B.C."/>
            <person name="Niemann J."/>
            <person name="Pujic P."/>
            <person name="Rawnsley T."/>
            <person name="Rouy Z."/>
            <person name="Schenowitz C."/>
            <person name="Sellstedt A."/>
            <person name="Tavares F."/>
            <person name="Tomkins J.P."/>
            <person name="Vallenet D."/>
            <person name="Valverde C."/>
            <person name="Wall L.G."/>
            <person name="Wang Y."/>
            <person name="Medigue C."/>
            <person name="Benson D.R."/>
        </authorList>
    </citation>
    <scope>NUCLEOTIDE SEQUENCE [LARGE SCALE GENOMIC DNA]</scope>
    <source>
        <strain>DSM 45986 / CECT 9034 / ACN14a</strain>
    </source>
</reference>
<accession>Q0RI14</accession>
<keyword id="KW-0028">Amino-acid biosynthesis</keyword>
<keyword id="KW-0368">Histidine biosynthesis</keyword>
<keyword id="KW-0378">Hydrolase</keyword>
<keyword id="KW-0486">Methionine biosynthesis</keyword>
<keyword id="KW-0511">Multifunctional enzyme</keyword>
<keyword id="KW-0521">NADP</keyword>
<keyword id="KW-0554">One-carbon metabolism</keyword>
<keyword id="KW-0560">Oxidoreductase</keyword>
<keyword id="KW-0658">Purine biosynthesis</keyword>
<keyword id="KW-1185">Reference proteome</keyword>
<organism>
    <name type="scientific">Frankia alni (strain DSM 45986 / CECT 9034 / ACN14a)</name>
    <dbReference type="NCBI Taxonomy" id="326424"/>
    <lineage>
        <taxon>Bacteria</taxon>
        <taxon>Bacillati</taxon>
        <taxon>Actinomycetota</taxon>
        <taxon>Actinomycetes</taxon>
        <taxon>Frankiales</taxon>
        <taxon>Frankiaceae</taxon>
        <taxon>Frankia</taxon>
    </lineage>
</organism>
<proteinExistence type="inferred from homology"/>